<accession>P9WHM9</accession>
<accession>L0T6F1</accession>
<accession>P65893</accession>
<accession>P71827</accession>
<name>PUR2_MYCTU</name>
<gene>
    <name evidence="2" type="primary">purD</name>
    <name type="ordered locus">Rv0772</name>
    <name type="ORF">MTCY369.17</name>
</gene>
<protein>
    <recommendedName>
        <fullName evidence="2">Phosphoribosylamine--glycine ligase</fullName>
        <ecNumber evidence="2">6.3.4.13</ecNumber>
    </recommendedName>
    <alternativeName>
        <fullName evidence="2">GARS</fullName>
    </alternativeName>
    <alternativeName>
        <fullName evidence="2">Glycinamide ribonucleotide synthetase</fullName>
    </alternativeName>
    <alternativeName>
        <fullName evidence="2">Phosphoribosylglycinamide synthetase</fullName>
    </alternativeName>
</protein>
<feature type="chain" id="PRO_0000151464" description="Phosphoribosylamine--glycine ligase">
    <location>
        <begin position="1"/>
        <end position="422"/>
    </location>
</feature>
<feature type="domain" description="ATP-grasp" evidence="2">
    <location>
        <begin position="107"/>
        <end position="312"/>
    </location>
</feature>
<feature type="binding site" evidence="2">
    <location>
        <begin position="137"/>
        <end position="193"/>
    </location>
    <ligand>
        <name>ATP</name>
        <dbReference type="ChEBI" id="CHEBI:30616"/>
    </ligand>
</feature>
<feature type="binding site" evidence="2">
    <location>
        <position position="282"/>
    </location>
    <ligand>
        <name>Mg(2+)</name>
        <dbReference type="ChEBI" id="CHEBI:18420"/>
    </ligand>
</feature>
<feature type="binding site" evidence="2">
    <location>
        <position position="284"/>
    </location>
    <ligand>
        <name>Mg(2+)</name>
        <dbReference type="ChEBI" id="CHEBI:18420"/>
    </ligand>
</feature>
<proteinExistence type="evidence at protein level"/>
<sequence>MRVLVIGSGAREHALLLALGKDPQVSGLIVAPGNAGTARIAEQHDVDITSAEAVVALAREVGADMVVIGPEVPLVLGVADAVRAAGIVCFGPGKDAARIEGSKAFAKDVMAAAGVRTANSEIVDSPAHLDAALDRFGPPAGDPAWVVKDDRLAAGKGVVVTADRDVARAHGAALLEAGHPVLLESYLDGPEVSLFCVVDRTVVVPLLPAQDFKRVGEDDTGLNTGGMGAYAPLPWLPDNIYREVVSRIVEPVAAELVRRGSSFCGLLYVGLAITARGPAVVEFNCRFGDPETQAVLALLESPLGQLLHAAATGKLADFGELRWRDGVAVTVVLAAENYPGRPRVGDVVVGSEAEGVLHAGTTRRDDGAIVSSGGRVLSVVGTGADLSAARAHAYEILSSIRLPGGHFRSDIGLRAAEGKISV</sequence>
<comment type="catalytic activity">
    <reaction evidence="2">
        <text>5-phospho-beta-D-ribosylamine + glycine + ATP = N(1)-(5-phospho-beta-D-ribosyl)glycinamide + ADP + phosphate + H(+)</text>
        <dbReference type="Rhea" id="RHEA:17453"/>
        <dbReference type="ChEBI" id="CHEBI:15378"/>
        <dbReference type="ChEBI" id="CHEBI:30616"/>
        <dbReference type="ChEBI" id="CHEBI:43474"/>
        <dbReference type="ChEBI" id="CHEBI:57305"/>
        <dbReference type="ChEBI" id="CHEBI:58681"/>
        <dbReference type="ChEBI" id="CHEBI:143788"/>
        <dbReference type="ChEBI" id="CHEBI:456216"/>
        <dbReference type="EC" id="6.3.4.13"/>
    </reaction>
</comment>
<comment type="cofactor">
    <cofactor evidence="1">
        <name>Mg(2+)</name>
        <dbReference type="ChEBI" id="CHEBI:18420"/>
    </cofactor>
    <cofactor evidence="1">
        <name>Mn(2+)</name>
        <dbReference type="ChEBI" id="CHEBI:29035"/>
    </cofactor>
    <text evidence="1">Binds 1 Mg(2+) or Mn(2+) ion per subunit.</text>
</comment>
<comment type="pathway">
    <text evidence="2">Purine metabolism; IMP biosynthesis via de novo pathway; N(1)-(5-phospho-D-ribosyl)glycinamide from 5-phospho-alpha-D-ribose 1-diphosphate: step 2/2.</text>
</comment>
<comment type="similarity">
    <text evidence="2">Belongs to the GARS family.</text>
</comment>
<dbReference type="EC" id="6.3.4.13" evidence="2"/>
<dbReference type="EMBL" id="AL123456">
    <property type="protein sequence ID" value="CCP43519.1"/>
    <property type="molecule type" value="Genomic_DNA"/>
</dbReference>
<dbReference type="PIR" id="G70707">
    <property type="entry name" value="G70707"/>
</dbReference>
<dbReference type="RefSeq" id="NP_215286.1">
    <property type="nucleotide sequence ID" value="NC_000962.3"/>
</dbReference>
<dbReference type="RefSeq" id="WP_003898580.1">
    <property type="nucleotide sequence ID" value="NZ_NVQJ01000035.1"/>
</dbReference>
<dbReference type="SMR" id="P9WHM9"/>
<dbReference type="FunCoup" id="P9WHM9">
    <property type="interactions" value="307"/>
</dbReference>
<dbReference type="STRING" id="83332.Rv0772"/>
<dbReference type="PaxDb" id="83332-Rv0772"/>
<dbReference type="DNASU" id="888873"/>
<dbReference type="GeneID" id="888873"/>
<dbReference type="KEGG" id="mtu:Rv0772"/>
<dbReference type="KEGG" id="mtv:RVBD_0772"/>
<dbReference type="TubercuList" id="Rv0772"/>
<dbReference type="eggNOG" id="COG0151">
    <property type="taxonomic scope" value="Bacteria"/>
</dbReference>
<dbReference type="InParanoid" id="P9WHM9"/>
<dbReference type="OrthoDB" id="9807240at2"/>
<dbReference type="PhylomeDB" id="P9WHM9"/>
<dbReference type="UniPathway" id="UPA00074">
    <property type="reaction ID" value="UER00125"/>
</dbReference>
<dbReference type="Proteomes" id="UP000001584">
    <property type="component" value="Chromosome"/>
</dbReference>
<dbReference type="GO" id="GO:0005524">
    <property type="term" value="F:ATP binding"/>
    <property type="evidence" value="ECO:0007669"/>
    <property type="project" value="UniProtKB-KW"/>
</dbReference>
<dbReference type="GO" id="GO:0046872">
    <property type="term" value="F:metal ion binding"/>
    <property type="evidence" value="ECO:0007669"/>
    <property type="project" value="UniProtKB-KW"/>
</dbReference>
<dbReference type="GO" id="GO:0004637">
    <property type="term" value="F:phosphoribosylamine-glycine ligase activity"/>
    <property type="evidence" value="ECO:0007669"/>
    <property type="project" value="UniProtKB-UniRule"/>
</dbReference>
<dbReference type="GO" id="GO:0006189">
    <property type="term" value="P:'de novo' IMP biosynthetic process"/>
    <property type="evidence" value="ECO:0007669"/>
    <property type="project" value="UniProtKB-UniRule"/>
</dbReference>
<dbReference type="GO" id="GO:0009113">
    <property type="term" value="P:purine nucleobase biosynthetic process"/>
    <property type="evidence" value="ECO:0007669"/>
    <property type="project" value="InterPro"/>
</dbReference>
<dbReference type="Gene3D" id="3.40.50.20">
    <property type="match status" value="1"/>
</dbReference>
<dbReference type="Gene3D" id="3.30.1490.20">
    <property type="entry name" value="ATP-grasp fold, A domain"/>
    <property type="match status" value="1"/>
</dbReference>
<dbReference type="Gene3D" id="3.30.470.20">
    <property type="entry name" value="ATP-grasp fold, B domain"/>
    <property type="match status" value="1"/>
</dbReference>
<dbReference type="Gene3D" id="3.90.600.10">
    <property type="entry name" value="Phosphoribosylglycinamide synthetase, C-terminal domain"/>
    <property type="match status" value="1"/>
</dbReference>
<dbReference type="HAMAP" id="MF_00138">
    <property type="entry name" value="GARS"/>
    <property type="match status" value="1"/>
</dbReference>
<dbReference type="InterPro" id="IPR011761">
    <property type="entry name" value="ATP-grasp"/>
</dbReference>
<dbReference type="InterPro" id="IPR013815">
    <property type="entry name" value="ATP_grasp_subdomain_1"/>
</dbReference>
<dbReference type="InterPro" id="IPR016185">
    <property type="entry name" value="PreATP-grasp_dom_sf"/>
</dbReference>
<dbReference type="InterPro" id="IPR020561">
    <property type="entry name" value="PRibGlycinamid_synth_ATP-grasp"/>
</dbReference>
<dbReference type="InterPro" id="IPR000115">
    <property type="entry name" value="PRibGlycinamide_synth"/>
</dbReference>
<dbReference type="InterPro" id="IPR020560">
    <property type="entry name" value="PRibGlycinamide_synth_C-dom"/>
</dbReference>
<dbReference type="InterPro" id="IPR037123">
    <property type="entry name" value="PRibGlycinamide_synth_C_sf"/>
</dbReference>
<dbReference type="InterPro" id="IPR020559">
    <property type="entry name" value="PRibGlycinamide_synth_CS"/>
</dbReference>
<dbReference type="InterPro" id="IPR020562">
    <property type="entry name" value="PRibGlycinamide_synth_N"/>
</dbReference>
<dbReference type="InterPro" id="IPR011054">
    <property type="entry name" value="Rudment_hybrid_motif"/>
</dbReference>
<dbReference type="NCBIfam" id="TIGR00877">
    <property type="entry name" value="purD"/>
    <property type="match status" value="1"/>
</dbReference>
<dbReference type="PANTHER" id="PTHR43472">
    <property type="entry name" value="PHOSPHORIBOSYLAMINE--GLYCINE LIGASE"/>
    <property type="match status" value="1"/>
</dbReference>
<dbReference type="PANTHER" id="PTHR43472:SF1">
    <property type="entry name" value="PHOSPHORIBOSYLAMINE--GLYCINE LIGASE, CHLOROPLASTIC"/>
    <property type="match status" value="1"/>
</dbReference>
<dbReference type="Pfam" id="PF01071">
    <property type="entry name" value="GARS_A"/>
    <property type="match status" value="1"/>
</dbReference>
<dbReference type="Pfam" id="PF02843">
    <property type="entry name" value="GARS_C"/>
    <property type="match status" value="1"/>
</dbReference>
<dbReference type="Pfam" id="PF02844">
    <property type="entry name" value="GARS_N"/>
    <property type="match status" value="1"/>
</dbReference>
<dbReference type="SMART" id="SM01209">
    <property type="entry name" value="GARS_A"/>
    <property type="match status" value="1"/>
</dbReference>
<dbReference type="SMART" id="SM01210">
    <property type="entry name" value="GARS_C"/>
    <property type="match status" value="1"/>
</dbReference>
<dbReference type="SUPFAM" id="SSF56059">
    <property type="entry name" value="Glutathione synthetase ATP-binding domain-like"/>
    <property type="match status" value="1"/>
</dbReference>
<dbReference type="SUPFAM" id="SSF52440">
    <property type="entry name" value="PreATP-grasp domain"/>
    <property type="match status" value="1"/>
</dbReference>
<dbReference type="SUPFAM" id="SSF51246">
    <property type="entry name" value="Rudiment single hybrid motif"/>
    <property type="match status" value="1"/>
</dbReference>
<dbReference type="PROSITE" id="PS50975">
    <property type="entry name" value="ATP_GRASP"/>
    <property type="match status" value="1"/>
</dbReference>
<dbReference type="PROSITE" id="PS00184">
    <property type="entry name" value="GARS"/>
    <property type="match status" value="1"/>
</dbReference>
<evidence type="ECO:0000250" key="1"/>
<evidence type="ECO:0000255" key="2">
    <source>
        <dbReference type="HAMAP-Rule" id="MF_00138"/>
    </source>
</evidence>
<reference key="1">
    <citation type="journal article" date="1998" name="Nature">
        <title>Deciphering the biology of Mycobacterium tuberculosis from the complete genome sequence.</title>
        <authorList>
            <person name="Cole S.T."/>
            <person name="Brosch R."/>
            <person name="Parkhill J."/>
            <person name="Garnier T."/>
            <person name="Churcher C.M."/>
            <person name="Harris D.E."/>
            <person name="Gordon S.V."/>
            <person name="Eiglmeier K."/>
            <person name="Gas S."/>
            <person name="Barry C.E. III"/>
            <person name="Tekaia F."/>
            <person name="Badcock K."/>
            <person name="Basham D."/>
            <person name="Brown D."/>
            <person name="Chillingworth T."/>
            <person name="Connor R."/>
            <person name="Davies R.M."/>
            <person name="Devlin K."/>
            <person name="Feltwell T."/>
            <person name="Gentles S."/>
            <person name="Hamlin N."/>
            <person name="Holroyd S."/>
            <person name="Hornsby T."/>
            <person name="Jagels K."/>
            <person name="Krogh A."/>
            <person name="McLean J."/>
            <person name="Moule S."/>
            <person name="Murphy L.D."/>
            <person name="Oliver S."/>
            <person name="Osborne J."/>
            <person name="Quail M.A."/>
            <person name="Rajandream M.A."/>
            <person name="Rogers J."/>
            <person name="Rutter S."/>
            <person name="Seeger K."/>
            <person name="Skelton S."/>
            <person name="Squares S."/>
            <person name="Squares R."/>
            <person name="Sulston J.E."/>
            <person name="Taylor K."/>
            <person name="Whitehead S."/>
            <person name="Barrell B.G."/>
        </authorList>
    </citation>
    <scope>NUCLEOTIDE SEQUENCE [LARGE SCALE GENOMIC DNA]</scope>
    <source>
        <strain>ATCC 25618 / H37Rv</strain>
    </source>
</reference>
<reference key="2">
    <citation type="journal article" date="2011" name="Mol. Cell. Proteomics">
        <title>Proteogenomic analysis of Mycobacterium tuberculosis by high resolution mass spectrometry.</title>
        <authorList>
            <person name="Kelkar D.S."/>
            <person name="Kumar D."/>
            <person name="Kumar P."/>
            <person name="Balakrishnan L."/>
            <person name="Muthusamy B."/>
            <person name="Yadav A.K."/>
            <person name="Shrivastava P."/>
            <person name="Marimuthu A."/>
            <person name="Anand S."/>
            <person name="Sundaram H."/>
            <person name="Kingsbury R."/>
            <person name="Harsha H.C."/>
            <person name="Nair B."/>
            <person name="Prasad T.S."/>
            <person name="Chauhan D.S."/>
            <person name="Katoch K."/>
            <person name="Katoch V.M."/>
            <person name="Kumar P."/>
            <person name="Chaerkady R."/>
            <person name="Ramachandran S."/>
            <person name="Dash D."/>
            <person name="Pandey A."/>
        </authorList>
    </citation>
    <scope>IDENTIFICATION BY MASS SPECTROMETRY [LARGE SCALE ANALYSIS]</scope>
    <source>
        <strain>ATCC 25618 / H37Rv</strain>
    </source>
</reference>
<keyword id="KW-0067">ATP-binding</keyword>
<keyword id="KW-0436">Ligase</keyword>
<keyword id="KW-0460">Magnesium</keyword>
<keyword id="KW-0464">Manganese</keyword>
<keyword id="KW-0479">Metal-binding</keyword>
<keyword id="KW-0547">Nucleotide-binding</keyword>
<keyword id="KW-0658">Purine biosynthesis</keyword>
<keyword id="KW-1185">Reference proteome</keyword>
<organism>
    <name type="scientific">Mycobacterium tuberculosis (strain ATCC 25618 / H37Rv)</name>
    <dbReference type="NCBI Taxonomy" id="83332"/>
    <lineage>
        <taxon>Bacteria</taxon>
        <taxon>Bacillati</taxon>
        <taxon>Actinomycetota</taxon>
        <taxon>Actinomycetes</taxon>
        <taxon>Mycobacteriales</taxon>
        <taxon>Mycobacteriaceae</taxon>
        <taxon>Mycobacterium</taxon>
        <taxon>Mycobacterium tuberculosis complex</taxon>
    </lineage>
</organism>